<comment type="catalytic activity">
    <reaction evidence="1">
        <text>urea + 2 H2O + H(+) = hydrogencarbonate + 2 NH4(+)</text>
        <dbReference type="Rhea" id="RHEA:20557"/>
        <dbReference type="ChEBI" id="CHEBI:15377"/>
        <dbReference type="ChEBI" id="CHEBI:15378"/>
        <dbReference type="ChEBI" id="CHEBI:16199"/>
        <dbReference type="ChEBI" id="CHEBI:17544"/>
        <dbReference type="ChEBI" id="CHEBI:28938"/>
        <dbReference type="EC" id="3.5.1.5"/>
    </reaction>
</comment>
<comment type="pathway">
    <text evidence="1">Nitrogen metabolism; urea degradation; CO(2) and NH(3) from urea (urease route): step 1/1.</text>
</comment>
<comment type="subunit">
    <text evidence="1">Heterotrimer of UreA (gamma), UreB (beta) and UreC (alpha) subunits. Three heterotrimers associate to form the active enzyme.</text>
</comment>
<comment type="subcellular location">
    <subcellularLocation>
        <location evidence="1">Cytoplasm</location>
    </subcellularLocation>
</comment>
<comment type="similarity">
    <text evidence="1">Belongs to the urease beta subunit family.</text>
</comment>
<keyword id="KW-0963">Cytoplasm</keyword>
<keyword id="KW-0378">Hydrolase</keyword>
<dbReference type="EC" id="3.5.1.5" evidence="1"/>
<dbReference type="EMBL" id="CP000283">
    <property type="protein sequence ID" value="ABE40726.1"/>
    <property type="molecule type" value="Genomic_DNA"/>
</dbReference>
<dbReference type="SMR" id="Q133L3"/>
<dbReference type="STRING" id="316057.RPD_3503"/>
<dbReference type="KEGG" id="rpd:RPD_3503"/>
<dbReference type="eggNOG" id="COG0832">
    <property type="taxonomic scope" value="Bacteria"/>
</dbReference>
<dbReference type="HOGENOM" id="CLU_129707_1_1_5"/>
<dbReference type="BioCyc" id="RPAL316057:RPD_RS17615-MONOMER"/>
<dbReference type="UniPathway" id="UPA00258">
    <property type="reaction ID" value="UER00370"/>
</dbReference>
<dbReference type="Proteomes" id="UP000001818">
    <property type="component" value="Chromosome"/>
</dbReference>
<dbReference type="GO" id="GO:0035550">
    <property type="term" value="C:urease complex"/>
    <property type="evidence" value="ECO:0007669"/>
    <property type="project" value="InterPro"/>
</dbReference>
<dbReference type="GO" id="GO:0009039">
    <property type="term" value="F:urease activity"/>
    <property type="evidence" value="ECO:0007669"/>
    <property type="project" value="UniProtKB-UniRule"/>
</dbReference>
<dbReference type="GO" id="GO:0043419">
    <property type="term" value="P:urea catabolic process"/>
    <property type="evidence" value="ECO:0007669"/>
    <property type="project" value="UniProtKB-UniRule"/>
</dbReference>
<dbReference type="CDD" id="cd00407">
    <property type="entry name" value="Urease_beta"/>
    <property type="match status" value="1"/>
</dbReference>
<dbReference type="FunFam" id="2.10.150.10:FF:000001">
    <property type="entry name" value="Urease subunit beta"/>
    <property type="match status" value="1"/>
</dbReference>
<dbReference type="Gene3D" id="2.10.150.10">
    <property type="entry name" value="Urease, beta subunit"/>
    <property type="match status" value="1"/>
</dbReference>
<dbReference type="HAMAP" id="MF_01954">
    <property type="entry name" value="Urease_beta"/>
    <property type="match status" value="1"/>
</dbReference>
<dbReference type="InterPro" id="IPR002019">
    <property type="entry name" value="Urease_beta-like"/>
</dbReference>
<dbReference type="InterPro" id="IPR036461">
    <property type="entry name" value="Urease_betasu_sf"/>
</dbReference>
<dbReference type="InterPro" id="IPR050069">
    <property type="entry name" value="Urease_subunit"/>
</dbReference>
<dbReference type="NCBIfam" id="NF009682">
    <property type="entry name" value="PRK13203.1"/>
    <property type="match status" value="1"/>
</dbReference>
<dbReference type="NCBIfam" id="TIGR00192">
    <property type="entry name" value="urease_beta"/>
    <property type="match status" value="1"/>
</dbReference>
<dbReference type="PANTHER" id="PTHR33569">
    <property type="entry name" value="UREASE"/>
    <property type="match status" value="1"/>
</dbReference>
<dbReference type="PANTHER" id="PTHR33569:SF1">
    <property type="entry name" value="UREASE"/>
    <property type="match status" value="1"/>
</dbReference>
<dbReference type="Pfam" id="PF00699">
    <property type="entry name" value="Urease_beta"/>
    <property type="match status" value="1"/>
</dbReference>
<dbReference type="SUPFAM" id="SSF51278">
    <property type="entry name" value="Urease, beta-subunit"/>
    <property type="match status" value="1"/>
</dbReference>
<proteinExistence type="inferred from homology"/>
<feature type="chain" id="PRO_1000070768" description="Urease subunit beta">
    <location>
        <begin position="1"/>
        <end position="104"/>
    </location>
</feature>
<organism>
    <name type="scientific">Rhodopseudomonas palustris (strain BisB5)</name>
    <dbReference type="NCBI Taxonomy" id="316057"/>
    <lineage>
        <taxon>Bacteria</taxon>
        <taxon>Pseudomonadati</taxon>
        <taxon>Pseudomonadota</taxon>
        <taxon>Alphaproteobacteria</taxon>
        <taxon>Hyphomicrobiales</taxon>
        <taxon>Nitrobacteraceae</taxon>
        <taxon>Rhodopseudomonas</taxon>
    </lineage>
</organism>
<reference key="1">
    <citation type="submission" date="2006-03" db="EMBL/GenBank/DDBJ databases">
        <title>Complete sequence of Rhodopseudomonas palustris BisB5.</title>
        <authorList>
            <consortium name="US DOE Joint Genome Institute"/>
            <person name="Copeland A."/>
            <person name="Lucas S."/>
            <person name="Lapidus A."/>
            <person name="Barry K."/>
            <person name="Detter J.C."/>
            <person name="Glavina del Rio T."/>
            <person name="Hammon N."/>
            <person name="Israni S."/>
            <person name="Dalin E."/>
            <person name="Tice H."/>
            <person name="Pitluck S."/>
            <person name="Chain P."/>
            <person name="Malfatti S."/>
            <person name="Shin M."/>
            <person name="Vergez L."/>
            <person name="Schmutz J."/>
            <person name="Larimer F."/>
            <person name="Land M."/>
            <person name="Hauser L."/>
            <person name="Pelletier D.A."/>
            <person name="Kyrpides N."/>
            <person name="Lykidis A."/>
            <person name="Oda Y."/>
            <person name="Harwood C.S."/>
            <person name="Richardson P."/>
        </authorList>
    </citation>
    <scope>NUCLEOTIDE SEQUENCE [LARGE SCALE GENOMIC DNA]</scope>
    <source>
        <strain>BisB5</strain>
    </source>
</reference>
<gene>
    <name evidence="1" type="primary">ureB</name>
    <name type="ordered locus">RPD_3503</name>
</gene>
<accession>Q133L3</accession>
<evidence type="ECO:0000255" key="1">
    <source>
        <dbReference type="HAMAP-Rule" id="MF_01954"/>
    </source>
</evidence>
<name>URE2_RHOPS</name>
<protein>
    <recommendedName>
        <fullName evidence="1">Urease subunit beta</fullName>
        <ecNumber evidence="1">3.5.1.5</ecNumber>
    </recommendedName>
    <alternativeName>
        <fullName evidence="1">Urea amidohydrolase subunit beta</fullName>
    </alternativeName>
</protein>
<sequence length="104" mass="11360">MIPGEFLIEDGEIELNAGRATVTLSVANAGDRPIQVGSHYHFFETNPALKFDRKKARGMRLDIAAGTAVRFEPGQTREVQLVALAGKRVVYGFRGDVMGKLDKA</sequence>